<feature type="chain" id="PRO_0000105460" description="Beta sliding clamp">
    <location>
        <begin position="1"/>
        <end position="78" status="greater than"/>
    </location>
</feature>
<feature type="non-terminal residue">
    <location>
        <position position="78"/>
    </location>
</feature>
<reference key="1">
    <citation type="journal article" date="1987" name="J. Bacteriol.">
        <title>Comparison of dnaA nucleotide sequences of Escherichia coli, Salmonella typhimurium, and Serratia marcescens.</title>
        <authorList>
            <person name="Skovgaard O."/>
            <person name="Hansen F.G."/>
        </authorList>
    </citation>
    <scope>NUCLEOTIDE SEQUENCE [GENOMIC DNA]</scope>
</reference>
<sequence length="78" mass="8548">MKFIVEREHLLKPLQQVSSPLGGRPTLPILGNLLLQVTEGSLLLTGTDLEMEMVARVALSQPHEPGATTVPARKFFDI</sequence>
<evidence type="ECO:0000250" key="1">
    <source>
        <dbReference type="UniProtKB" id="P0A988"/>
    </source>
</evidence>
<evidence type="ECO:0000305" key="2"/>
<keyword id="KW-0963">Cytoplasm</keyword>
<keyword id="KW-0235">DNA replication</keyword>
<keyword id="KW-0238">DNA-binding</keyword>
<keyword id="KW-0239">DNA-directed DNA polymerase</keyword>
<keyword id="KW-0548">Nucleotidyltransferase</keyword>
<keyword id="KW-0808">Transferase</keyword>
<comment type="function">
    <text evidence="1">Confers DNA tethering and processivity to DNA polymerases and other proteins. Acts as a clamp, forming a ring around DNA (a reaction catalyzed by the clamp-loading complex) which diffuses in an ATP-independent manner freely and bidirectionally along dsDNA. Initially characterized for its ability to contact the catalytic subunit of DNA polymerase III (Pol III), a complex, multichain enzyme responsible for most of the replicative synthesis in bacteria; Pol III exhibits 3'-5' exonuclease proofreading activity. The beta chain is required for initiation of replication as well as for processivity of DNA replication.</text>
</comment>
<comment type="subunit">
    <text evidence="1">Forms a ring-shaped head-to-tail homodimer around DNA which binds and tethers DNA polymerases and other proteins to the DNA. The DNA replisome complex has a single clamp-loading complex (3 tau and 1 each of delta, delta', psi and chi subunits) which binds 3 Pol III cores (1 core on the leading strand and 2 on the lagging strand) each with a beta sliding clamp dimer. Additional proteins in the replisome are other copies of gamma, psi and chi, Ssb, DNA helicase and RNA primase.</text>
</comment>
<comment type="subcellular location">
    <subcellularLocation>
        <location evidence="1">Cytoplasm</location>
    </subcellularLocation>
</comment>
<comment type="similarity">
    <text evidence="2">Belongs to the beta sliding clamp family.</text>
</comment>
<protein>
    <recommendedName>
        <fullName>Beta sliding clamp</fullName>
        <shortName>Beta clamp</shortName>
        <shortName>Sliding clamp</shortName>
    </recommendedName>
    <alternativeName>
        <fullName>Beta-clamp processivity factor</fullName>
    </alternativeName>
    <alternativeName>
        <fullName>DNA polymerase III beta sliding clamp subunit</fullName>
    </alternativeName>
    <alternativeName>
        <fullName>DNA polymerase III subunit beta</fullName>
    </alternativeName>
</protein>
<dbReference type="EMBL" id="M17353">
    <property type="protein sequence ID" value="AAA02925.1"/>
    <property type="molecule type" value="Genomic_DNA"/>
</dbReference>
<dbReference type="SMR" id="P29438"/>
<dbReference type="STRING" id="273526.SMDB11_4152"/>
<dbReference type="GO" id="GO:0005737">
    <property type="term" value="C:cytoplasm"/>
    <property type="evidence" value="ECO:0007669"/>
    <property type="project" value="UniProtKB-SubCell"/>
</dbReference>
<dbReference type="GO" id="GO:0009360">
    <property type="term" value="C:DNA polymerase III complex"/>
    <property type="evidence" value="ECO:0007669"/>
    <property type="project" value="InterPro"/>
</dbReference>
<dbReference type="GO" id="GO:0008408">
    <property type="term" value="F:3'-5' exonuclease activity"/>
    <property type="evidence" value="ECO:0007669"/>
    <property type="project" value="InterPro"/>
</dbReference>
<dbReference type="GO" id="GO:0003677">
    <property type="term" value="F:DNA binding"/>
    <property type="evidence" value="ECO:0007669"/>
    <property type="project" value="UniProtKB-KW"/>
</dbReference>
<dbReference type="GO" id="GO:0003887">
    <property type="term" value="F:DNA-directed DNA polymerase activity"/>
    <property type="evidence" value="ECO:0007669"/>
    <property type="project" value="UniProtKB-KW"/>
</dbReference>
<dbReference type="GO" id="GO:0006271">
    <property type="term" value="P:DNA strand elongation involved in DNA replication"/>
    <property type="evidence" value="ECO:0007669"/>
    <property type="project" value="TreeGrafter"/>
</dbReference>
<dbReference type="CDD" id="cd00140">
    <property type="entry name" value="beta_clamp"/>
    <property type="match status" value="1"/>
</dbReference>
<dbReference type="Gene3D" id="3.10.150.10">
    <property type="entry name" value="DNA Polymerase III, subunit A, domain 2"/>
    <property type="match status" value="1"/>
</dbReference>
<dbReference type="InterPro" id="IPR046938">
    <property type="entry name" value="DNA_clamp_sf"/>
</dbReference>
<dbReference type="InterPro" id="IPR001001">
    <property type="entry name" value="DNA_polIII_beta"/>
</dbReference>
<dbReference type="InterPro" id="IPR022634">
    <property type="entry name" value="DNA_polIII_beta_N"/>
</dbReference>
<dbReference type="PANTHER" id="PTHR30478:SF0">
    <property type="entry name" value="BETA SLIDING CLAMP"/>
    <property type="match status" value="1"/>
</dbReference>
<dbReference type="PANTHER" id="PTHR30478">
    <property type="entry name" value="DNA POLYMERASE III SUBUNIT BETA"/>
    <property type="match status" value="1"/>
</dbReference>
<dbReference type="Pfam" id="PF00712">
    <property type="entry name" value="DNA_pol3_beta"/>
    <property type="match status" value="1"/>
</dbReference>
<dbReference type="SUPFAM" id="SSF55979">
    <property type="entry name" value="DNA clamp"/>
    <property type="match status" value="1"/>
</dbReference>
<organism>
    <name type="scientific">Serratia marcescens</name>
    <dbReference type="NCBI Taxonomy" id="615"/>
    <lineage>
        <taxon>Bacteria</taxon>
        <taxon>Pseudomonadati</taxon>
        <taxon>Pseudomonadota</taxon>
        <taxon>Gammaproteobacteria</taxon>
        <taxon>Enterobacterales</taxon>
        <taxon>Yersiniaceae</taxon>
        <taxon>Serratia</taxon>
    </lineage>
</organism>
<proteinExistence type="inferred from homology"/>
<accession>P29438</accession>
<gene>
    <name type="primary">dnaN</name>
</gene>
<name>DPO3B_SERMA</name>